<accession>Q87E90</accession>
<gene>
    <name evidence="1" type="primary">atpD</name>
    <name type="ordered locus">PD_0428</name>
</gene>
<sequence length="466" mass="50724">MNQGKIVQIIGAIVDVEFPRNNVPKVYNALKIDGTAIILEVQQQLGDGIVRTIALGSTDGLKRNLIATDTGHAITVPVGTGTLGRIMDVLGNPIDEAGPITYTDQWEIHRNAPSYEDQASTTELLETGIKVIDLMCPFAKGGKVGLFGGAGVGKTVNMMELINNIAKAHSGLSVFAGVGERTREGNDFYHEMKDSNVLDKVAMVYGQMNEPPGNRLRVALTGLTMAEYFRDEKDSSGKGKDVLLFIDNIYRYTLAGTEVSALLGRMPSAVGYQPTLAEEMGVLQERITSTANGSITSIQAVYVPADDLTDPSPATTFGHLDSTVTLSRSIAALGIYPAVDPLDSSSRQMDPLIIGEEHYNTTQRVQQTLQKYKDLKDIIAILGMDELSEDDKLSVSRARKIERFFSQPFHVAEVFTGAPGKYVPLKDTIRGFKAIVDGEYDHLPEQAFYMVGNIEEVIEKANKMTA</sequence>
<reference key="1">
    <citation type="journal article" date="2003" name="J. Bacteriol.">
        <title>Comparative analyses of the complete genome sequences of Pierce's disease and citrus variegated chlorosis strains of Xylella fastidiosa.</title>
        <authorList>
            <person name="Van Sluys M.A."/>
            <person name="de Oliveira M.C."/>
            <person name="Monteiro-Vitorello C.B."/>
            <person name="Miyaki C.Y."/>
            <person name="Furlan L.R."/>
            <person name="Camargo L.E.A."/>
            <person name="da Silva A.C.R."/>
            <person name="Moon D.H."/>
            <person name="Takita M.A."/>
            <person name="Lemos E.G.M."/>
            <person name="Machado M.A."/>
            <person name="Ferro M.I.T."/>
            <person name="da Silva F.R."/>
            <person name="Goldman M.H.S."/>
            <person name="Goldman G.H."/>
            <person name="Lemos M.V.F."/>
            <person name="El-Dorry H."/>
            <person name="Tsai S.M."/>
            <person name="Carrer H."/>
            <person name="Carraro D.M."/>
            <person name="de Oliveira R.C."/>
            <person name="Nunes L.R."/>
            <person name="Siqueira W.J."/>
            <person name="Coutinho L.L."/>
            <person name="Kimura E.T."/>
            <person name="Ferro E.S."/>
            <person name="Harakava R."/>
            <person name="Kuramae E.E."/>
            <person name="Marino C.L."/>
            <person name="Giglioti E."/>
            <person name="Abreu I.L."/>
            <person name="Alves L.M.C."/>
            <person name="do Amaral A.M."/>
            <person name="Baia G.S."/>
            <person name="Blanco S.R."/>
            <person name="Brito M.S."/>
            <person name="Cannavan F.S."/>
            <person name="Celestino A.V."/>
            <person name="da Cunha A.F."/>
            <person name="Fenille R.C."/>
            <person name="Ferro J.A."/>
            <person name="Formighieri E.F."/>
            <person name="Kishi L.T."/>
            <person name="Leoni S.G."/>
            <person name="Oliveira A.R."/>
            <person name="Rosa V.E. Jr."/>
            <person name="Sassaki F.T."/>
            <person name="Sena J.A.D."/>
            <person name="de Souza A.A."/>
            <person name="Truffi D."/>
            <person name="Tsukumo F."/>
            <person name="Yanai G.M."/>
            <person name="Zaros L.G."/>
            <person name="Civerolo E.L."/>
            <person name="Simpson A.J.G."/>
            <person name="Almeida N.F. Jr."/>
            <person name="Setubal J.C."/>
            <person name="Kitajima J.P."/>
        </authorList>
    </citation>
    <scope>NUCLEOTIDE SEQUENCE [LARGE SCALE GENOMIC DNA]</scope>
    <source>
        <strain>Temecula1 / ATCC 700964</strain>
    </source>
</reference>
<evidence type="ECO:0000255" key="1">
    <source>
        <dbReference type="HAMAP-Rule" id="MF_01347"/>
    </source>
</evidence>
<organism>
    <name type="scientific">Xylella fastidiosa (strain Temecula1 / ATCC 700964)</name>
    <dbReference type="NCBI Taxonomy" id="183190"/>
    <lineage>
        <taxon>Bacteria</taxon>
        <taxon>Pseudomonadati</taxon>
        <taxon>Pseudomonadota</taxon>
        <taxon>Gammaproteobacteria</taxon>
        <taxon>Lysobacterales</taxon>
        <taxon>Lysobacteraceae</taxon>
        <taxon>Xylella</taxon>
    </lineage>
</organism>
<comment type="function">
    <text evidence="1">Produces ATP from ADP in the presence of a proton gradient across the membrane. The catalytic sites are hosted primarily by the beta subunits.</text>
</comment>
<comment type="catalytic activity">
    <reaction evidence="1">
        <text>ATP + H2O + 4 H(+)(in) = ADP + phosphate + 5 H(+)(out)</text>
        <dbReference type="Rhea" id="RHEA:57720"/>
        <dbReference type="ChEBI" id="CHEBI:15377"/>
        <dbReference type="ChEBI" id="CHEBI:15378"/>
        <dbReference type="ChEBI" id="CHEBI:30616"/>
        <dbReference type="ChEBI" id="CHEBI:43474"/>
        <dbReference type="ChEBI" id="CHEBI:456216"/>
        <dbReference type="EC" id="7.1.2.2"/>
    </reaction>
</comment>
<comment type="subunit">
    <text evidence="1">F-type ATPases have 2 components, CF(1) - the catalytic core - and CF(0) - the membrane proton channel. CF(1) has five subunits: alpha(3), beta(3), gamma(1), delta(1), epsilon(1). CF(0) has three main subunits: a(1), b(2) and c(9-12). The alpha and beta chains form an alternating ring which encloses part of the gamma chain. CF(1) is attached to CF(0) by a central stalk formed by the gamma and epsilon chains, while a peripheral stalk is formed by the delta and b chains.</text>
</comment>
<comment type="subcellular location">
    <subcellularLocation>
        <location evidence="1">Cell inner membrane</location>
        <topology evidence="1">Peripheral membrane protein</topology>
    </subcellularLocation>
</comment>
<comment type="similarity">
    <text evidence="1">Belongs to the ATPase alpha/beta chains family.</text>
</comment>
<feature type="chain" id="PRO_0000254434" description="ATP synthase subunit beta">
    <location>
        <begin position="1"/>
        <end position="466"/>
    </location>
</feature>
<feature type="binding site" evidence="1">
    <location>
        <begin position="148"/>
        <end position="155"/>
    </location>
    <ligand>
        <name>ATP</name>
        <dbReference type="ChEBI" id="CHEBI:30616"/>
    </ligand>
</feature>
<dbReference type="EC" id="7.1.2.2" evidence="1"/>
<dbReference type="EMBL" id="AE009442">
    <property type="protein sequence ID" value="AAO28307.1"/>
    <property type="molecule type" value="Genomic_DNA"/>
</dbReference>
<dbReference type="RefSeq" id="WP_004090068.1">
    <property type="nucleotide sequence ID" value="NC_004556.1"/>
</dbReference>
<dbReference type="SMR" id="Q87E90"/>
<dbReference type="GeneID" id="93904130"/>
<dbReference type="KEGG" id="xft:PD_0428"/>
<dbReference type="HOGENOM" id="CLU_022398_0_2_6"/>
<dbReference type="Proteomes" id="UP000002516">
    <property type="component" value="Chromosome"/>
</dbReference>
<dbReference type="GO" id="GO:0005886">
    <property type="term" value="C:plasma membrane"/>
    <property type="evidence" value="ECO:0007669"/>
    <property type="project" value="UniProtKB-SubCell"/>
</dbReference>
<dbReference type="GO" id="GO:0045259">
    <property type="term" value="C:proton-transporting ATP synthase complex"/>
    <property type="evidence" value="ECO:0007669"/>
    <property type="project" value="UniProtKB-KW"/>
</dbReference>
<dbReference type="GO" id="GO:0005524">
    <property type="term" value="F:ATP binding"/>
    <property type="evidence" value="ECO:0007669"/>
    <property type="project" value="UniProtKB-UniRule"/>
</dbReference>
<dbReference type="GO" id="GO:0016887">
    <property type="term" value="F:ATP hydrolysis activity"/>
    <property type="evidence" value="ECO:0007669"/>
    <property type="project" value="InterPro"/>
</dbReference>
<dbReference type="GO" id="GO:0046933">
    <property type="term" value="F:proton-transporting ATP synthase activity, rotational mechanism"/>
    <property type="evidence" value="ECO:0007669"/>
    <property type="project" value="UniProtKB-UniRule"/>
</dbReference>
<dbReference type="CDD" id="cd18110">
    <property type="entry name" value="ATP-synt_F1_beta_C"/>
    <property type="match status" value="1"/>
</dbReference>
<dbReference type="CDD" id="cd18115">
    <property type="entry name" value="ATP-synt_F1_beta_N"/>
    <property type="match status" value="1"/>
</dbReference>
<dbReference type="CDD" id="cd01133">
    <property type="entry name" value="F1-ATPase_beta_CD"/>
    <property type="match status" value="1"/>
</dbReference>
<dbReference type="FunFam" id="1.10.1140.10:FF:000001">
    <property type="entry name" value="ATP synthase subunit beta"/>
    <property type="match status" value="1"/>
</dbReference>
<dbReference type="FunFam" id="3.40.50.300:FF:000004">
    <property type="entry name" value="ATP synthase subunit beta"/>
    <property type="match status" value="1"/>
</dbReference>
<dbReference type="Gene3D" id="2.40.10.170">
    <property type="match status" value="1"/>
</dbReference>
<dbReference type="Gene3D" id="1.10.1140.10">
    <property type="entry name" value="Bovine Mitochondrial F1-atpase, Atp Synthase Beta Chain, Chain D, domain 3"/>
    <property type="match status" value="1"/>
</dbReference>
<dbReference type="Gene3D" id="3.40.50.300">
    <property type="entry name" value="P-loop containing nucleotide triphosphate hydrolases"/>
    <property type="match status" value="1"/>
</dbReference>
<dbReference type="HAMAP" id="MF_01347">
    <property type="entry name" value="ATP_synth_beta_bact"/>
    <property type="match status" value="1"/>
</dbReference>
<dbReference type="InterPro" id="IPR003593">
    <property type="entry name" value="AAA+_ATPase"/>
</dbReference>
<dbReference type="InterPro" id="IPR055190">
    <property type="entry name" value="ATP-synt_VA_C"/>
</dbReference>
<dbReference type="InterPro" id="IPR005722">
    <property type="entry name" value="ATP_synth_F1_bsu"/>
</dbReference>
<dbReference type="InterPro" id="IPR020003">
    <property type="entry name" value="ATPase_a/bsu_AS"/>
</dbReference>
<dbReference type="InterPro" id="IPR050053">
    <property type="entry name" value="ATPase_alpha/beta_chains"/>
</dbReference>
<dbReference type="InterPro" id="IPR004100">
    <property type="entry name" value="ATPase_F1/V1/A1_a/bsu_N"/>
</dbReference>
<dbReference type="InterPro" id="IPR036121">
    <property type="entry name" value="ATPase_F1/V1/A1_a/bsu_N_sf"/>
</dbReference>
<dbReference type="InterPro" id="IPR000194">
    <property type="entry name" value="ATPase_F1/V1/A1_a/bsu_nucl-bd"/>
</dbReference>
<dbReference type="InterPro" id="IPR024034">
    <property type="entry name" value="ATPase_F1/V1_b/a_C"/>
</dbReference>
<dbReference type="InterPro" id="IPR027417">
    <property type="entry name" value="P-loop_NTPase"/>
</dbReference>
<dbReference type="NCBIfam" id="TIGR01039">
    <property type="entry name" value="atpD"/>
    <property type="match status" value="1"/>
</dbReference>
<dbReference type="PANTHER" id="PTHR15184">
    <property type="entry name" value="ATP SYNTHASE"/>
    <property type="match status" value="1"/>
</dbReference>
<dbReference type="PANTHER" id="PTHR15184:SF71">
    <property type="entry name" value="ATP SYNTHASE SUBUNIT BETA, MITOCHONDRIAL"/>
    <property type="match status" value="1"/>
</dbReference>
<dbReference type="Pfam" id="PF00006">
    <property type="entry name" value="ATP-synt_ab"/>
    <property type="match status" value="1"/>
</dbReference>
<dbReference type="Pfam" id="PF02874">
    <property type="entry name" value="ATP-synt_ab_N"/>
    <property type="match status" value="1"/>
</dbReference>
<dbReference type="Pfam" id="PF22919">
    <property type="entry name" value="ATP-synt_VA_C"/>
    <property type="match status" value="1"/>
</dbReference>
<dbReference type="SMART" id="SM00382">
    <property type="entry name" value="AAA"/>
    <property type="match status" value="1"/>
</dbReference>
<dbReference type="SUPFAM" id="SSF47917">
    <property type="entry name" value="C-terminal domain of alpha and beta subunits of F1 ATP synthase"/>
    <property type="match status" value="1"/>
</dbReference>
<dbReference type="SUPFAM" id="SSF50615">
    <property type="entry name" value="N-terminal domain of alpha and beta subunits of F1 ATP synthase"/>
    <property type="match status" value="1"/>
</dbReference>
<dbReference type="SUPFAM" id="SSF52540">
    <property type="entry name" value="P-loop containing nucleoside triphosphate hydrolases"/>
    <property type="match status" value="1"/>
</dbReference>
<dbReference type="PROSITE" id="PS00152">
    <property type="entry name" value="ATPASE_ALPHA_BETA"/>
    <property type="match status" value="1"/>
</dbReference>
<protein>
    <recommendedName>
        <fullName evidence="1">ATP synthase subunit beta</fullName>
        <ecNumber evidence="1">7.1.2.2</ecNumber>
    </recommendedName>
    <alternativeName>
        <fullName evidence="1">ATP synthase F1 sector subunit beta</fullName>
    </alternativeName>
    <alternativeName>
        <fullName evidence="1">F-ATPase subunit beta</fullName>
    </alternativeName>
</protein>
<proteinExistence type="inferred from homology"/>
<name>ATPB_XYLFT</name>
<keyword id="KW-0066">ATP synthesis</keyword>
<keyword id="KW-0067">ATP-binding</keyword>
<keyword id="KW-0997">Cell inner membrane</keyword>
<keyword id="KW-1003">Cell membrane</keyword>
<keyword id="KW-0139">CF(1)</keyword>
<keyword id="KW-0375">Hydrogen ion transport</keyword>
<keyword id="KW-0406">Ion transport</keyword>
<keyword id="KW-0472">Membrane</keyword>
<keyword id="KW-0547">Nucleotide-binding</keyword>
<keyword id="KW-1185">Reference proteome</keyword>
<keyword id="KW-1278">Translocase</keyword>
<keyword id="KW-0813">Transport</keyword>